<evidence type="ECO:0000250" key="1"/>
<evidence type="ECO:0000255" key="2"/>
<evidence type="ECO:0000305" key="3"/>
<feature type="signal peptide" evidence="2">
    <location>
        <begin position="1"/>
        <end position="20"/>
    </location>
</feature>
<feature type="chain" id="PRO_0000393292" description="Probable exo-1,4-beta-xylosidase xlnD">
    <location>
        <begin position="21"/>
        <end position="793"/>
    </location>
</feature>
<feature type="active site" evidence="1">
    <location>
        <position position="310"/>
    </location>
</feature>
<feature type="glycosylation site" description="N-linked (GlcNAc...) asparagine" evidence="2">
    <location>
        <position position="23"/>
    </location>
</feature>
<feature type="glycosylation site" description="N-linked (GlcNAc...) asparagine" evidence="2">
    <location>
        <position position="87"/>
    </location>
</feature>
<feature type="glycosylation site" description="N-linked (GlcNAc...) asparagine" evidence="2">
    <location>
        <position position="142"/>
    </location>
</feature>
<feature type="glycosylation site" description="N-linked (GlcNAc...) asparagine" evidence="2">
    <location>
        <position position="326"/>
    </location>
</feature>
<feature type="glycosylation site" description="N-linked (GlcNAc...) asparagine" evidence="2">
    <location>
        <position position="385"/>
    </location>
</feature>
<feature type="glycosylation site" description="N-linked (GlcNAc...) asparagine" evidence="2">
    <location>
        <position position="404"/>
    </location>
</feature>
<feature type="glycosylation site" description="N-linked (GlcNAc...) asparagine" evidence="2">
    <location>
        <position position="440"/>
    </location>
</feature>
<feature type="glycosylation site" description="N-linked (GlcNAc...) asparagine" evidence="2">
    <location>
        <position position="477"/>
    </location>
</feature>
<feature type="glycosylation site" description="N-linked (GlcNAc...) asparagine" evidence="2">
    <location>
        <position position="518"/>
    </location>
</feature>
<feature type="glycosylation site" description="N-linked (GlcNAc...) asparagine" evidence="2">
    <location>
        <position position="559"/>
    </location>
</feature>
<feature type="glycosylation site" description="N-linked (GlcNAc...) asparagine" evidence="2">
    <location>
        <position position="614"/>
    </location>
</feature>
<feature type="glycosylation site" description="N-linked (GlcNAc...) asparagine" evidence="2">
    <location>
        <position position="652"/>
    </location>
</feature>
<feature type="glycosylation site" description="N-linked (GlcNAc...) asparagine" evidence="2">
    <location>
        <position position="679"/>
    </location>
</feature>
<feature type="glycosylation site" description="N-linked (GlcNAc...) asparagine" evidence="2">
    <location>
        <position position="701"/>
    </location>
</feature>
<dbReference type="EC" id="3.2.1.37"/>
<dbReference type="EMBL" id="CH476600">
    <property type="protein sequence ID" value="EAU34175.1"/>
    <property type="status" value="ALT_SEQ"/>
    <property type="molecule type" value="Genomic_DNA"/>
</dbReference>
<dbReference type="RefSeq" id="XP_001214284.1">
    <property type="nucleotide sequence ID" value="XM_001214284.1"/>
</dbReference>
<dbReference type="SMR" id="Q0CMH8"/>
<dbReference type="STRING" id="341663.Q0CMH8"/>
<dbReference type="GlyCosmos" id="Q0CMH8">
    <property type="glycosylation" value="14 sites, No reported glycans"/>
</dbReference>
<dbReference type="GeneID" id="4320717"/>
<dbReference type="eggNOG" id="ENOG502QQ55">
    <property type="taxonomic scope" value="Eukaryota"/>
</dbReference>
<dbReference type="OrthoDB" id="47059at2759"/>
<dbReference type="UniPathway" id="UPA00114"/>
<dbReference type="Proteomes" id="UP000007963">
    <property type="component" value="Unassembled WGS sequence"/>
</dbReference>
<dbReference type="GO" id="GO:0005576">
    <property type="term" value="C:extracellular region"/>
    <property type="evidence" value="ECO:0007669"/>
    <property type="project" value="UniProtKB-SubCell"/>
</dbReference>
<dbReference type="GO" id="GO:0046556">
    <property type="term" value="F:alpha-L-arabinofuranosidase activity"/>
    <property type="evidence" value="ECO:0007669"/>
    <property type="project" value="TreeGrafter"/>
</dbReference>
<dbReference type="GO" id="GO:0009044">
    <property type="term" value="F:xylan 1,4-beta-xylosidase activity"/>
    <property type="evidence" value="ECO:0007669"/>
    <property type="project" value="UniProtKB-EC"/>
</dbReference>
<dbReference type="GO" id="GO:0031222">
    <property type="term" value="P:arabinan catabolic process"/>
    <property type="evidence" value="ECO:0007669"/>
    <property type="project" value="TreeGrafter"/>
</dbReference>
<dbReference type="GO" id="GO:0045493">
    <property type="term" value="P:xylan catabolic process"/>
    <property type="evidence" value="ECO:0007669"/>
    <property type="project" value="UniProtKB-UniPathway"/>
</dbReference>
<dbReference type="FunFam" id="2.60.40.10:FF:001420">
    <property type="entry name" value="Exo-1,4-beta-xylosidase xlnD"/>
    <property type="match status" value="1"/>
</dbReference>
<dbReference type="FunFam" id="3.20.20.300:FF:000009">
    <property type="entry name" value="Exo-1,4-beta-xylosidase xlnD"/>
    <property type="match status" value="1"/>
</dbReference>
<dbReference type="FunFam" id="3.40.50.1700:FF:000007">
    <property type="entry name" value="Exo-1,4-beta-xylosidase xlnD"/>
    <property type="match status" value="1"/>
</dbReference>
<dbReference type="Gene3D" id="3.40.50.1700">
    <property type="entry name" value="Glycoside hydrolase family 3 C-terminal domain"/>
    <property type="match status" value="1"/>
</dbReference>
<dbReference type="Gene3D" id="3.20.20.300">
    <property type="entry name" value="Glycoside hydrolase, family 3, N-terminal domain"/>
    <property type="match status" value="1"/>
</dbReference>
<dbReference type="Gene3D" id="2.60.40.10">
    <property type="entry name" value="Immunoglobulins"/>
    <property type="match status" value="1"/>
</dbReference>
<dbReference type="InterPro" id="IPR044993">
    <property type="entry name" value="BXL"/>
</dbReference>
<dbReference type="InterPro" id="IPR026891">
    <property type="entry name" value="Fn3-like"/>
</dbReference>
<dbReference type="InterPro" id="IPR002772">
    <property type="entry name" value="Glyco_hydro_3_C"/>
</dbReference>
<dbReference type="InterPro" id="IPR036881">
    <property type="entry name" value="Glyco_hydro_3_C_sf"/>
</dbReference>
<dbReference type="InterPro" id="IPR001764">
    <property type="entry name" value="Glyco_hydro_3_N"/>
</dbReference>
<dbReference type="InterPro" id="IPR036962">
    <property type="entry name" value="Glyco_hydro_3_N_sf"/>
</dbReference>
<dbReference type="InterPro" id="IPR017853">
    <property type="entry name" value="Glycoside_hydrolase_SF"/>
</dbReference>
<dbReference type="InterPro" id="IPR013783">
    <property type="entry name" value="Ig-like_fold"/>
</dbReference>
<dbReference type="PANTHER" id="PTHR42721:SF13">
    <property type="entry name" value="EXO-1,4-BETA-XYLOSIDASE XLND"/>
    <property type="match status" value="1"/>
</dbReference>
<dbReference type="PANTHER" id="PTHR42721">
    <property type="entry name" value="SUGAR HYDROLASE-RELATED"/>
    <property type="match status" value="1"/>
</dbReference>
<dbReference type="Pfam" id="PF14310">
    <property type="entry name" value="Fn3-like"/>
    <property type="match status" value="1"/>
</dbReference>
<dbReference type="Pfam" id="PF00933">
    <property type="entry name" value="Glyco_hydro_3"/>
    <property type="match status" value="1"/>
</dbReference>
<dbReference type="Pfam" id="PF01915">
    <property type="entry name" value="Glyco_hydro_3_C"/>
    <property type="match status" value="1"/>
</dbReference>
<dbReference type="SMART" id="SM01217">
    <property type="entry name" value="Fn3_like"/>
    <property type="match status" value="1"/>
</dbReference>
<dbReference type="SUPFAM" id="SSF51445">
    <property type="entry name" value="(Trans)glycosidases"/>
    <property type="match status" value="1"/>
</dbReference>
<dbReference type="SUPFAM" id="SSF52279">
    <property type="entry name" value="Beta-D-glucan exohydrolase, C-terminal domain"/>
    <property type="match status" value="1"/>
</dbReference>
<proteinExistence type="inferred from homology"/>
<gene>
    <name type="primary">xlnD</name>
    <name type="synonym">xylA</name>
    <name type="ORF">ATEG_05106</name>
</gene>
<reference key="1">
    <citation type="submission" date="2005-09" db="EMBL/GenBank/DDBJ databases">
        <title>Annotation of the Aspergillus terreus NIH2624 genome.</title>
        <authorList>
            <person name="Birren B.W."/>
            <person name="Lander E.S."/>
            <person name="Galagan J.E."/>
            <person name="Nusbaum C."/>
            <person name="Devon K."/>
            <person name="Henn M."/>
            <person name="Ma L.-J."/>
            <person name="Jaffe D.B."/>
            <person name="Butler J."/>
            <person name="Alvarez P."/>
            <person name="Gnerre S."/>
            <person name="Grabherr M."/>
            <person name="Kleber M."/>
            <person name="Mauceli E.W."/>
            <person name="Brockman W."/>
            <person name="Rounsley S."/>
            <person name="Young S.K."/>
            <person name="LaButti K."/>
            <person name="Pushparaj V."/>
            <person name="DeCaprio D."/>
            <person name="Crawford M."/>
            <person name="Koehrsen M."/>
            <person name="Engels R."/>
            <person name="Montgomery P."/>
            <person name="Pearson M."/>
            <person name="Howarth C."/>
            <person name="Larson L."/>
            <person name="Luoma S."/>
            <person name="White J."/>
            <person name="Alvarado L."/>
            <person name="Kodira C.D."/>
            <person name="Zeng Q."/>
            <person name="Oleary S."/>
            <person name="Yandava C."/>
            <person name="Denning D.W."/>
            <person name="Nierman W.C."/>
            <person name="Milne T."/>
            <person name="Madden K."/>
        </authorList>
    </citation>
    <scope>NUCLEOTIDE SEQUENCE [LARGE SCALE GENOMIC DNA]</scope>
    <source>
        <strain>NIH 2624 / FGSC A1156</strain>
    </source>
</reference>
<keyword id="KW-0119">Carbohydrate metabolism</keyword>
<keyword id="KW-0325">Glycoprotein</keyword>
<keyword id="KW-0326">Glycosidase</keyword>
<keyword id="KW-0378">Hydrolase</keyword>
<keyword id="KW-0624">Polysaccharide degradation</keyword>
<keyword id="KW-1185">Reference proteome</keyword>
<keyword id="KW-0964">Secreted</keyword>
<keyword id="KW-0732">Signal</keyword>
<keyword id="KW-0858">Xylan degradation</keyword>
<name>XYND_ASPTN</name>
<organism>
    <name type="scientific">Aspergillus terreus (strain NIH 2624 / FGSC A1156)</name>
    <dbReference type="NCBI Taxonomy" id="341663"/>
    <lineage>
        <taxon>Eukaryota</taxon>
        <taxon>Fungi</taxon>
        <taxon>Dikarya</taxon>
        <taxon>Ascomycota</taxon>
        <taxon>Pezizomycotina</taxon>
        <taxon>Eurotiomycetes</taxon>
        <taxon>Eurotiomycetidae</taxon>
        <taxon>Eurotiales</taxon>
        <taxon>Aspergillaceae</taxon>
        <taxon>Aspergillus</taxon>
        <taxon>Aspergillus subgen. Circumdati</taxon>
    </lineage>
</organism>
<comment type="function">
    <text evidence="1">Xylan 1,4-beta-xylosidase involved in the hydrolysis of xylan, a major structural heterogeneous polysaccharide found in plant biomass representing the second most abundant polysaccharide in the biosphere, after cellulose.</text>
</comment>
<comment type="catalytic activity">
    <reaction>
        <text>Hydrolysis of (1-&gt;4)-beta-D-xylans, to remove successive D-xylose residues from the non-reducing termini.</text>
        <dbReference type="EC" id="3.2.1.37"/>
    </reaction>
</comment>
<comment type="pathway">
    <text>Glycan degradation; xylan degradation.</text>
</comment>
<comment type="subcellular location">
    <subcellularLocation>
        <location evidence="1">Secreted</location>
    </subcellularLocation>
</comment>
<comment type="similarity">
    <text evidence="3">Belongs to the glycosyl hydrolase 3 family.</text>
</comment>
<comment type="sequence caution" evidence="3">
    <conflict type="erroneous gene model prediction">
        <sequence resource="EMBL-CDS" id="EAU34175"/>
    </conflict>
</comment>
<accession>Q0CMH8</accession>
<protein>
    <recommendedName>
        <fullName>Probable exo-1,4-beta-xylosidase xlnD</fullName>
        <ecNumber>3.2.1.37</ecNumber>
    </recommendedName>
    <alternativeName>
        <fullName>1,4-beta-D-xylan xylohydrolase xlnD</fullName>
    </alternativeName>
    <alternativeName>
        <fullName>Beta-xylosidase A</fullName>
    </alternativeName>
    <alternativeName>
        <fullName>Beta-xylosidase xlnD</fullName>
    </alternativeName>
    <alternativeName>
        <fullName>Xylobiase xlnD</fullName>
    </alternativeName>
</protein>
<sequence>MPRVASVAAVLAALLPSALGQANTSYVDYNHEANPDLFPQCVATIELSFPDCENGPLSKTLVCDKSARPHDRAAALVSMFTLEELVNNTGNTGTGVPRLGLPKYQVWSESLHGVYRANWASEGDYSWATSFPQPILTMAALNRTLIHQIGDILSTQARAFSNVGRYGLDTYAPNINSFRHPVWGRGQETPGEDAYYLASTYAYEYITGIQGGVDPETLKLVATAKHYAGYDIENWDGHSRLGNDMQITQQDLSEYYTPQFLVSARDAKVHSVMCSYNAVNGVPSCSNSFFLQTLLRETFGFVEDGYVSGDCGAVYNAFNPHEYAANESSASADSIRAGTDIDCGTSYQYHFTNAFDEGEISRQDIERGVIRLYTNLVRLGYFDGNSSQYRDLTWSDVQTTDAWNISHEAAVEGTVLLKNDGTLPLADSIRSVALIGPWANATTQMQGNYYGPAPYLTSPLAALEASDLDVHYAFGTNISSTTTAGFADALAAARKADAIIFAGGIDNTIEGEALDRMNITWPGNQLDLINQLSALGKPLVVLQMGGGQVDSSALKHNTNVSALLWGGYPGQSGGTALLDIIRGVRAPAGRLVTTQYPAGYATQFPAIDMGLRPNGTNPGQTYMWYTGTPVYEFGHGLFYTTFEAKRASTATNHSSFNIEDLLTAPHPGYAYPQLRPFLNFTAHITNTGRTTSDYTAMLFANTTAGPAPHPNKWLVGFDRLGALEPGASQTMTFPITIDNVARTDELGNRVLYPGRYELALNNERSVVLRFTLTGEKAVLMKWPLEKQEIPPAA</sequence>